<proteinExistence type="inferred from homology"/>
<gene>
    <name evidence="1" type="primary">psd</name>
    <name type="ordered locus">MLBr00311</name>
</gene>
<sequence>MARRPRAESSKEGPAHLLELVRSAVPPVHSAGHPFISAGLAVTSAGAVGQVVTGRDLRWLRRVGLLAASACAVFFRHPSRVPPTRAGVVVAPADGMICVIDSATPPAELSMGNMSLPRVSIFLSLLDVHVQRAPISGEVIAVQYQPGRFGAADLAPASTENERTSVRIRTAGGTEVVVVQIAGLLARRIVCYAHIGDKLTIGDTYGLIRFGSRLDTYLPPGTEPVVQVGQRAVAGETVLADLT</sequence>
<organism>
    <name type="scientific">Mycobacterium leprae (strain Br4923)</name>
    <dbReference type="NCBI Taxonomy" id="561304"/>
    <lineage>
        <taxon>Bacteria</taxon>
        <taxon>Bacillati</taxon>
        <taxon>Actinomycetota</taxon>
        <taxon>Actinomycetes</taxon>
        <taxon>Mycobacteriales</taxon>
        <taxon>Mycobacteriaceae</taxon>
        <taxon>Mycobacterium</taxon>
    </lineage>
</organism>
<dbReference type="EC" id="4.1.1.65" evidence="1"/>
<dbReference type="EMBL" id="FM211192">
    <property type="protein sequence ID" value="CAR70404.1"/>
    <property type="molecule type" value="Genomic_DNA"/>
</dbReference>
<dbReference type="KEGG" id="mlb:MLBr00311"/>
<dbReference type="HOGENOM" id="CLU_072492_0_0_11"/>
<dbReference type="UniPathway" id="UPA00558">
    <property type="reaction ID" value="UER00616"/>
</dbReference>
<dbReference type="Proteomes" id="UP000006900">
    <property type="component" value="Chromosome"/>
</dbReference>
<dbReference type="GO" id="GO:0005886">
    <property type="term" value="C:plasma membrane"/>
    <property type="evidence" value="ECO:0007669"/>
    <property type="project" value="UniProtKB-SubCell"/>
</dbReference>
<dbReference type="GO" id="GO:0004609">
    <property type="term" value="F:phosphatidylserine decarboxylase activity"/>
    <property type="evidence" value="ECO:0007669"/>
    <property type="project" value="UniProtKB-UniRule"/>
</dbReference>
<dbReference type="GO" id="GO:0006646">
    <property type="term" value="P:phosphatidylethanolamine biosynthetic process"/>
    <property type="evidence" value="ECO:0007669"/>
    <property type="project" value="UniProtKB-UniRule"/>
</dbReference>
<dbReference type="HAMAP" id="MF_00664">
    <property type="entry name" value="PS_decarb_PSD_A"/>
    <property type="match status" value="1"/>
</dbReference>
<dbReference type="InterPro" id="IPR003817">
    <property type="entry name" value="PS_Dcarbxylase"/>
</dbReference>
<dbReference type="InterPro" id="IPR033175">
    <property type="entry name" value="PSD-A"/>
</dbReference>
<dbReference type="NCBIfam" id="NF003679">
    <property type="entry name" value="PRK05305.1-3"/>
    <property type="match status" value="1"/>
</dbReference>
<dbReference type="PANTHER" id="PTHR35809">
    <property type="entry name" value="ARCHAETIDYLSERINE DECARBOXYLASE PROENZYME-RELATED"/>
    <property type="match status" value="1"/>
</dbReference>
<dbReference type="PANTHER" id="PTHR35809:SF1">
    <property type="entry name" value="ARCHAETIDYLSERINE DECARBOXYLASE PROENZYME-RELATED"/>
    <property type="match status" value="1"/>
</dbReference>
<dbReference type="Pfam" id="PF02666">
    <property type="entry name" value="PS_Dcarbxylase"/>
    <property type="match status" value="1"/>
</dbReference>
<evidence type="ECO:0000255" key="1">
    <source>
        <dbReference type="HAMAP-Rule" id="MF_00664"/>
    </source>
</evidence>
<comment type="function">
    <text evidence="1">Catalyzes the formation of phosphatidylethanolamine (PtdEtn) from phosphatidylserine (PtdSer).</text>
</comment>
<comment type="catalytic activity">
    <reaction evidence="1">
        <text>a 1,2-diacyl-sn-glycero-3-phospho-L-serine + H(+) = a 1,2-diacyl-sn-glycero-3-phosphoethanolamine + CO2</text>
        <dbReference type="Rhea" id="RHEA:20828"/>
        <dbReference type="ChEBI" id="CHEBI:15378"/>
        <dbReference type="ChEBI" id="CHEBI:16526"/>
        <dbReference type="ChEBI" id="CHEBI:57262"/>
        <dbReference type="ChEBI" id="CHEBI:64612"/>
        <dbReference type="EC" id="4.1.1.65"/>
    </reaction>
</comment>
<comment type="cofactor">
    <cofactor evidence="1">
        <name>pyruvate</name>
        <dbReference type="ChEBI" id="CHEBI:15361"/>
    </cofactor>
    <text evidence="1">Binds 1 pyruvoyl group covalently per subunit.</text>
</comment>
<comment type="pathway">
    <text evidence="1">Phospholipid metabolism; phosphatidylethanolamine biosynthesis; phosphatidylethanolamine from CDP-diacylglycerol: step 2/2.</text>
</comment>
<comment type="subunit">
    <text evidence="1">Heterodimer of a large membrane-associated beta subunit and a small pyruvoyl-containing alpha subunit.</text>
</comment>
<comment type="subcellular location">
    <subcellularLocation>
        <location evidence="1">Cell membrane</location>
        <topology evidence="1">Peripheral membrane protein</topology>
    </subcellularLocation>
</comment>
<comment type="PTM">
    <text evidence="1">Is synthesized initially as an inactive proenzyme. Formation of the active enzyme involves a self-maturation process in which the active site pyruvoyl group is generated from an internal serine residue via an autocatalytic post-translational modification. Two non-identical subunits are generated from the proenzyme in this reaction, and the pyruvate is formed at the N-terminus of the alpha chain, which is derived from the carboxyl end of the proenzyme. The post-translation cleavage follows an unusual pathway, termed non-hydrolytic serinolysis, in which the side chain hydroxyl group of the serine supplies its oxygen atom to form the C-terminus of the beta chain, while the remainder of the serine residue undergoes an oxidative deamination to produce ammonia and the pyruvoyl prosthetic group on the alpha chain.</text>
</comment>
<comment type="similarity">
    <text evidence="1">Belongs to the phosphatidylserine decarboxylase family. PSD-A subfamily.</text>
</comment>
<protein>
    <recommendedName>
        <fullName evidence="1">Phosphatidylserine decarboxylase proenzyme</fullName>
        <ecNumber evidence="1">4.1.1.65</ecNumber>
    </recommendedName>
    <component>
        <recommendedName>
            <fullName evidence="1">Phosphatidylserine decarboxylase alpha chain</fullName>
        </recommendedName>
    </component>
    <component>
        <recommendedName>
            <fullName evidence="1">Phosphatidylserine decarboxylase beta chain</fullName>
        </recommendedName>
    </component>
</protein>
<feature type="chain" id="PRO_1000192902" description="Phosphatidylserine decarboxylase beta chain" evidence="1">
    <location>
        <begin position="1"/>
        <end position="211"/>
    </location>
</feature>
<feature type="chain" id="PRO_1000192903" description="Phosphatidylserine decarboxylase alpha chain" evidence="1">
    <location>
        <begin position="212"/>
        <end position="243"/>
    </location>
</feature>
<feature type="active site" description="Schiff-base intermediate with substrate; via pyruvic acid" evidence="1">
    <location>
        <position position="212"/>
    </location>
</feature>
<feature type="site" description="Cleavage (non-hydrolytic); by autocatalysis" evidence="1">
    <location>
        <begin position="211"/>
        <end position="212"/>
    </location>
</feature>
<feature type="modified residue" description="Pyruvic acid (Ser); by autocatalysis" evidence="1">
    <location>
        <position position="212"/>
    </location>
</feature>
<keyword id="KW-1003">Cell membrane</keyword>
<keyword id="KW-0210">Decarboxylase</keyword>
<keyword id="KW-0444">Lipid biosynthesis</keyword>
<keyword id="KW-0443">Lipid metabolism</keyword>
<keyword id="KW-0456">Lyase</keyword>
<keyword id="KW-0472">Membrane</keyword>
<keyword id="KW-0594">Phospholipid biosynthesis</keyword>
<keyword id="KW-1208">Phospholipid metabolism</keyword>
<keyword id="KW-0670">Pyruvate</keyword>
<keyword id="KW-0865">Zymogen</keyword>
<accession>B8ZUA0</accession>
<name>PSD_MYCLB</name>
<reference key="1">
    <citation type="journal article" date="2009" name="Nat. Genet.">
        <title>Comparative genomic and phylogeographic analysis of Mycobacterium leprae.</title>
        <authorList>
            <person name="Monot M."/>
            <person name="Honore N."/>
            <person name="Garnier T."/>
            <person name="Zidane N."/>
            <person name="Sherafi D."/>
            <person name="Paniz-Mondolfi A."/>
            <person name="Matsuoka M."/>
            <person name="Taylor G.M."/>
            <person name="Donoghue H.D."/>
            <person name="Bouwman A."/>
            <person name="Mays S."/>
            <person name="Watson C."/>
            <person name="Lockwood D."/>
            <person name="Khamispour A."/>
            <person name="Dowlati Y."/>
            <person name="Jianping S."/>
            <person name="Rea T.H."/>
            <person name="Vera-Cabrera L."/>
            <person name="Stefani M.M."/>
            <person name="Banu S."/>
            <person name="Macdonald M."/>
            <person name="Sapkota B.R."/>
            <person name="Spencer J.S."/>
            <person name="Thomas J."/>
            <person name="Harshman K."/>
            <person name="Singh P."/>
            <person name="Busso P."/>
            <person name="Gattiker A."/>
            <person name="Rougemont J."/>
            <person name="Brennan P.J."/>
            <person name="Cole S.T."/>
        </authorList>
    </citation>
    <scope>NUCLEOTIDE SEQUENCE [LARGE SCALE GENOMIC DNA]</scope>
    <source>
        <strain>Br4923</strain>
    </source>
</reference>